<evidence type="ECO:0000255" key="1">
    <source>
        <dbReference type="HAMAP-Rule" id="MF_00488"/>
    </source>
</evidence>
<keyword id="KW-0021">Allosteric enzyme</keyword>
<keyword id="KW-0963">Cytoplasm</keyword>
<keyword id="KW-0520">NAD</keyword>
<keyword id="KW-0560">Oxidoreductase</keyword>
<keyword id="KW-0597">Phosphoprotein</keyword>
<keyword id="KW-1185">Reference proteome</keyword>
<sequence length="326" mass="35237">MTAPQPHTITPPTPGSKIVLIGAGDVGIAYAYTLVNQGLTDHLAIIDLDERKTWGHVQDLNHAVPWSHHNTRVTVGTYEDCRDAAMVCICAGAAQKPGETRLDLVAKNTAIFKTIVGDVMSHGFNGIFLVASNPVDILSYATWKFSGMDSSRVIGSGTILDTARFRYALGRYFDLAPTSVHAYVIGEHGDTELPVLSAGSVAGTSIHHRLEMIGESADEDVDEIFVKTRDAAYEIIQAKGSTSFGIGMGLARITQAVFSNQDVVLPISTLLQGEYGFEDIYIGTPAVINRQGVRHAVELQLDSEEKERFDHSANVLRKVMGEAGLI</sequence>
<name>LDH_CORJK</name>
<gene>
    <name evidence="1" type="primary">ldh</name>
    <name type="ordered locus">jk0113</name>
</gene>
<comment type="function">
    <text evidence="1">Catalyzes the conversion of lactate to pyruvate.</text>
</comment>
<comment type="catalytic activity">
    <reaction evidence="1">
        <text>(S)-lactate + NAD(+) = pyruvate + NADH + H(+)</text>
        <dbReference type="Rhea" id="RHEA:23444"/>
        <dbReference type="ChEBI" id="CHEBI:15361"/>
        <dbReference type="ChEBI" id="CHEBI:15378"/>
        <dbReference type="ChEBI" id="CHEBI:16651"/>
        <dbReference type="ChEBI" id="CHEBI:57540"/>
        <dbReference type="ChEBI" id="CHEBI:57945"/>
        <dbReference type="EC" id="1.1.1.27"/>
    </reaction>
</comment>
<comment type="activity regulation">
    <text evidence="1">Allosterically activated by fructose 1,6-bisphosphate (FBP).</text>
</comment>
<comment type="pathway">
    <text evidence="1">Fermentation; pyruvate fermentation to lactate; (S)-lactate from pyruvate: step 1/1.</text>
</comment>
<comment type="subunit">
    <text evidence="1">Homotetramer.</text>
</comment>
<comment type="subcellular location">
    <subcellularLocation>
        <location evidence="1">Cytoplasm</location>
    </subcellularLocation>
</comment>
<comment type="similarity">
    <text evidence="1">Belongs to the LDH/MDH superfamily. LDH family.</text>
</comment>
<feature type="chain" id="PRO_0000237545" description="L-lactate dehydrogenase">
    <location>
        <begin position="1"/>
        <end position="326"/>
    </location>
</feature>
<feature type="active site" description="Proton acceptor" evidence="1">
    <location>
        <position position="188"/>
    </location>
</feature>
<feature type="binding site" evidence="1">
    <location>
        <position position="26"/>
    </location>
    <ligand>
        <name>NAD(+)</name>
        <dbReference type="ChEBI" id="CHEBI:57540"/>
    </ligand>
</feature>
<feature type="binding site" evidence="1">
    <location>
        <position position="47"/>
    </location>
    <ligand>
        <name>NAD(+)</name>
        <dbReference type="ChEBI" id="CHEBI:57540"/>
    </ligand>
</feature>
<feature type="binding site" evidence="1">
    <location>
        <position position="52"/>
    </location>
    <ligand>
        <name>NAD(+)</name>
        <dbReference type="ChEBI" id="CHEBI:57540"/>
    </ligand>
</feature>
<feature type="binding site" evidence="1">
    <location>
        <position position="78"/>
    </location>
    <ligand>
        <name>NAD(+)</name>
        <dbReference type="ChEBI" id="CHEBI:57540"/>
    </ligand>
</feature>
<feature type="binding site" evidence="1">
    <location>
        <begin position="92"/>
        <end position="93"/>
    </location>
    <ligand>
        <name>NAD(+)</name>
        <dbReference type="ChEBI" id="CHEBI:57540"/>
    </ligand>
</feature>
<feature type="binding site" evidence="1">
    <location>
        <position position="95"/>
    </location>
    <ligand>
        <name>substrate</name>
    </ligand>
</feature>
<feature type="binding site" evidence="1">
    <location>
        <position position="101"/>
    </location>
    <ligand>
        <name>substrate</name>
    </ligand>
</feature>
<feature type="binding site" evidence="1">
    <location>
        <position position="114"/>
    </location>
    <ligand>
        <name>NAD(+)</name>
        <dbReference type="ChEBI" id="CHEBI:57540"/>
    </ligand>
</feature>
<feature type="binding site" evidence="1">
    <location>
        <begin position="131"/>
        <end position="133"/>
    </location>
    <ligand>
        <name>NAD(+)</name>
        <dbReference type="ChEBI" id="CHEBI:57540"/>
    </ligand>
</feature>
<feature type="binding site" evidence="1">
    <location>
        <begin position="133"/>
        <end position="136"/>
    </location>
    <ligand>
        <name>substrate</name>
    </ligand>
</feature>
<feature type="binding site" evidence="1">
    <location>
        <position position="156"/>
    </location>
    <ligand>
        <name>NAD(+)</name>
        <dbReference type="ChEBI" id="CHEBI:57540"/>
    </ligand>
</feature>
<feature type="binding site" evidence="1">
    <location>
        <begin position="161"/>
        <end position="164"/>
    </location>
    <ligand>
        <name>substrate</name>
    </ligand>
</feature>
<feature type="binding site" evidence="1">
    <location>
        <position position="166"/>
    </location>
    <ligand>
        <name>beta-D-fructose 1,6-bisphosphate</name>
        <dbReference type="ChEBI" id="CHEBI:32966"/>
        <note>allosteric activator</note>
    </ligand>
</feature>
<feature type="binding site" evidence="1">
    <location>
        <position position="181"/>
    </location>
    <ligand>
        <name>beta-D-fructose 1,6-bisphosphate</name>
        <dbReference type="ChEBI" id="CHEBI:32966"/>
        <note>allosteric activator</note>
    </ligand>
</feature>
<feature type="binding site" evidence="1">
    <location>
        <position position="242"/>
    </location>
    <ligand>
        <name>substrate</name>
    </ligand>
</feature>
<feature type="modified residue" description="Phosphotyrosine" evidence="1">
    <location>
        <position position="233"/>
    </location>
</feature>
<reference key="1">
    <citation type="journal article" date="2005" name="J. Bacteriol.">
        <title>Complete genome sequence and analysis of the multiresistant nosocomial pathogen Corynebacterium jeikeium K411, a lipid-requiring bacterium of the human skin flora.</title>
        <authorList>
            <person name="Tauch A."/>
            <person name="Kaiser O."/>
            <person name="Hain T."/>
            <person name="Goesmann A."/>
            <person name="Weisshaar B."/>
            <person name="Albersmeier A."/>
            <person name="Bekel T."/>
            <person name="Bischoff N."/>
            <person name="Brune I."/>
            <person name="Chakraborty T."/>
            <person name="Kalinowski J."/>
            <person name="Meyer F."/>
            <person name="Rupp O."/>
            <person name="Schneiker S."/>
            <person name="Viehoever P."/>
            <person name="Puehler A."/>
        </authorList>
    </citation>
    <scope>NUCLEOTIDE SEQUENCE [LARGE SCALE GENOMIC DNA]</scope>
    <source>
        <strain>K411</strain>
    </source>
</reference>
<dbReference type="EC" id="1.1.1.27" evidence="1"/>
<dbReference type="EMBL" id="CR931997">
    <property type="protein sequence ID" value="CAI36265.1"/>
    <property type="molecule type" value="Genomic_DNA"/>
</dbReference>
<dbReference type="RefSeq" id="WP_011272856.1">
    <property type="nucleotide sequence ID" value="NC_007164.1"/>
</dbReference>
<dbReference type="SMR" id="Q4JY42"/>
<dbReference type="STRING" id="306537.jk0113"/>
<dbReference type="KEGG" id="cjk:jk0113"/>
<dbReference type="PATRIC" id="fig|306537.10.peg.125"/>
<dbReference type="eggNOG" id="COG0039">
    <property type="taxonomic scope" value="Bacteria"/>
</dbReference>
<dbReference type="HOGENOM" id="CLU_045401_1_1_11"/>
<dbReference type="OrthoDB" id="9802969at2"/>
<dbReference type="UniPathway" id="UPA00554">
    <property type="reaction ID" value="UER00611"/>
</dbReference>
<dbReference type="Proteomes" id="UP000000545">
    <property type="component" value="Chromosome"/>
</dbReference>
<dbReference type="GO" id="GO:0005737">
    <property type="term" value="C:cytoplasm"/>
    <property type="evidence" value="ECO:0007669"/>
    <property type="project" value="UniProtKB-SubCell"/>
</dbReference>
<dbReference type="GO" id="GO:0004459">
    <property type="term" value="F:L-lactate dehydrogenase activity"/>
    <property type="evidence" value="ECO:0007669"/>
    <property type="project" value="UniProtKB-UniRule"/>
</dbReference>
<dbReference type="GO" id="GO:0006096">
    <property type="term" value="P:glycolytic process"/>
    <property type="evidence" value="ECO:0007669"/>
    <property type="project" value="UniProtKB-UniRule"/>
</dbReference>
<dbReference type="GO" id="GO:0006089">
    <property type="term" value="P:lactate metabolic process"/>
    <property type="evidence" value="ECO:0007669"/>
    <property type="project" value="TreeGrafter"/>
</dbReference>
<dbReference type="CDD" id="cd05291">
    <property type="entry name" value="HicDH_like"/>
    <property type="match status" value="1"/>
</dbReference>
<dbReference type="FunFam" id="3.40.50.720:FF:000018">
    <property type="entry name" value="Malate dehydrogenase"/>
    <property type="match status" value="1"/>
</dbReference>
<dbReference type="Gene3D" id="3.90.110.10">
    <property type="entry name" value="Lactate dehydrogenase/glycoside hydrolase, family 4, C-terminal"/>
    <property type="match status" value="1"/>
</dbReference>
<dbReference type="Gene3D" id="3.40.50.720">
    <property type="entry name" value="NAD(P)-binding Rossmann-like Domain"/>
    <property type="match status" value="1"/>
</dbReference>
<dbReference type="HAMAP" id="MF_00488">
    <property type="entry name" value="Lactate_dehydrog"/>
    <property type="match status" value="1"/>
</dbReference>
<dbReference type="InterPro" id="IPR001557">
    <property type="entry name" value="L-lactate/malate_DH"/>
</dbReference>
<dbReference type="InterPro" id="IPR011304">
    <property type="entry name" value="L-lactate_DH"/>
</dbReference>
<dbReference type="InterPro" id="IPR018177">
    <property type="entry name" value="L-lactate_DH_AS"/>
</dbReference>
<dbReference type="InterPro" id="IPR022383">
    <property type="entry name" value="Lactate/malate_DH_C"/>
</dbReference>
<dbReference type="InterPro" id="IPR001236">
    <property type="entry name" value="Lactate/malate_DH_N"/>
</dbReference>
<dbReference type="InterPro" id="IPR015955">
    <property type="entry name" value="Lactate_DH/Glyco_Ohase_4_C"/>
</dbReference>
<dbReference type="InterPro" id="IPR036291">
    <property type="entry name" value="NAD(P)-bd_dom_sf"/>
</dbReference>
<dbReference type="NCBIfam" id="TIGR01771">
    <property type="entry name" value="L-LDH-NAD"/>
    <property type="match status" value="1"/>
</dbReference>
<dbReference type="NCBIfam" id="NF000824">
    <property type="entry name" value="PRK00066.1"/>
    <property type="match status" value="1"/>
</dbReference>
<dbReference type="PANTHER" id="PTHR43128">
    <property type="entry name" value="L-2-HYDROXYCARBOXYLATE DEHYDROGENASE (NAD(P)(+))"/>
    <property type="match status" value="1"/>
</dbReference>
<dbReference type="PANTHER" id="PTHR43128:SF16">
    <property type="entry name" value="L-LACTATE DEHYDROGENASE"/>
    <property type="match status" value="1"/>
</dbReference>
<dbReference type="Pfam" id="PF02866">
    <property type="entry name" value="Ldh_1_C"/>
    <property type="match status" value="1"/>
</dbReference>
<dbReference type="Pfam" id="PF00056">
    <property type="entry name" value="Ldh_1_N"/>
    <property type="match status" value="1"/>
</dbReference>
<dbReference type="PIRSF" id="PIRSF000102">
    <property type="entry name" value="Lac_mal_DH"/>
    <property type="match status" value="1"/>
</dbReference>
<dbReference type="PRINTS" id="PR00086">
    <property type="entry name" value="LLDHDRGNASE"/>
</dbReference>
<dbReference type="SUPFAM" id="SSF56327">
    <property type="entry name" value="LDH C-terminal domain-like"/>
    <property type="match status" value="1"/>
</dbReference>
<dbReference type="SUPFAM" id="SSF51735">
    <property type="entry name" value="NAD(P)-binding Rossmann-fold domains"/>
    <property type="match status" value="1"/>
</dbReference>
<dbReference type="PROSITE" id="PS00064">
    <property type="entry name" value="L_LDH"/>
    <property type="match status" value="1"/>
</dbReference>
<proteinExistence type="inferred from homology"/>
<protein>
    <recommendedName>
        <fullName evidence="1">L-lactate dehydrogenase</fullName>
        <shortName evidence="1">L-LDH</shortName>
        <ecNumber evidence="1">1.1.1.27</ecNumber>
    </recommendedName>
</protein>
<organism>
    <name type="scientific">Corynebacterium jeikeium (strain K411)</name>
    <dbReference type="NCBI Taxonomy" id="306537"/>
    <lineage>
        <taxon>Bacteria</taxon>
        <taxon>Bacillati</taxon>
        <taxon>Actinomycetota</taxon>
        <taxon>Actinomycetes</taxon>
        <taxon>Mycobacteriales</taxon>
        <taxon>Corynebacteriaceae</taxon>
        <taxon>Corynebacterium</taxon>
    </lineage>
</organism>
<accession>Q4JY42</accession>